<protein>
    <recommendedName>
        <fullName evidence="1">Non-structural protein 1</fullName>
        <shortName evidence="1">NS1</shortName>
    </recommendedName>
    <alternativeName>
        <fullName evidence="1">NS1A</fullName>
    </alternativeName>
</protein>
<keyword id="KW-0025">Alternative splicing</keyword>
<keyword id="KW-1262">Eukaryotic host gene expression shutoff by virus</keyword>
<keyword id="KW-1035">Host cytoplasm</keyword>
<keyword id="KW-1190">Host gene expression shutoff by virus</keyword>
<keyword id="KW-1192">Host mRNA suppression by virus</keyword>
<keyword id="KW-1048">Host nucleus</keyword>
<keyword id="KW-0945">Host-virus interaction</keyword>
<keyword id="KW-1090">Inhibition of host innate immune response by virus</keyword>
<keyword id="KW-1114">Inhibition of host interferon signaling pathway by virus</keyword>
<keyword id="KW-1102">Inhibition of host PKR by virus</keyword>
<keyword id="KW-1103">Inhibition of host pre-mRNA processing by virus</keyword>
<keyword id="KW-1088">Inhibition of host RIG-I by virus</keyword>
<keyword id="KW-1113">Inhibition of host RLR pathway by virus</keyword>
<keyword id="KW-0922">Interferon antiviral system evasion</keyword>
<keyword id="KW-0694">RNA-binding</keyword>
<keyword id="KW-0832">Ubl conjugation</keyword>
<keyword id="KW-0899">Viral immunoevasion</keyword>
<gene>
    <name evidence="1" type="primary">NS</name>
</gene>
<dbReference type="EMBL" id="AF509067">
    <property type="protein sequence ID" value="AAO52910.1"/>
    <property type="molecule type" value="Genomic_DNA"/>
</dbReference>
<dbReference type="SMR" id="Q809Y0"/>
<dbReference type="GO" id="GO:0030430">
    <property type="term" value="C:host cell cytoplasm"/>
    <property type="evidence" value="ECO:0007669"/>
    <property type="project" value="UniProtKB-SubCell"/>
</dbReference>
<dbReference type="GO" id="GO:0042025">
    <property type="term" value="C:host cell nucleus"/>
    <property type="evidence" value="ECO:0007669"/>
    <property type="project" value="UniProtKB-SubCell"/>
</dbReference>
<dbReference type="GO" id="GO:0030291">
    <property type="term" value="F:protein serine/threonine kinase inhibitor activity"/>
    <property type="evidence" value="ECO:0007669"/>
    <property type="project" value="UniProtKB-KW"/>
</dbReference>
<dbReference type="GO" id="GO:0003723">
    <property type="term" value="F:RNA binding"/>
    <property type="evidence" value="ECO:0007669"/>
    <property type="project" value="UniProtKB-KW"/>
</dbReference>
<dbReference type="GO" id="GO:0039540">
    <property type="term" value="P:symbiont-mediated suppression of host cytoplasmic pattern recognition receptor signaling pathway via inhibition of RIG-I activity"/>
    <property type="evidence" value="ECO:0007669"/>
    <property type="project" value="UniProtKB-KW"/>
</dbReference>
<dbReference type="GO" id="GO:0039657">
    <property type="term" value="P:symbiont-mediated suppression of host gene expression"/>
    <property type="evidence" value="ECO:0007669"/>
    <property type="project" value="UniProtKB-KW"/>
</dbReference>
<dbReference type="GO" id="GO:0039524">
    <property type="term" value="P:symbiont-mediated suppression of host mRNA processing"/>
    <property type="evidence" value="ECO:0007669"/>
    <property type="project" value="UniProtKB-KW"/>
</dbReference>
<dbReference type="GO" id="GO:0039580">
    <property type="term" value="P:symbiont-mediated suppression of host PKR/eIFalpha signaling"/>
    <property type="evidence" value="ECO:0007669"/>
    <property type="project" value="UniProtKB-KW"/>
</dbReference>
<dbReference type="GO" id="GO:0039502">
    <property type="term" value="P:symbiont-mediated suppression of host type I interferon-mediated signaling pathway"/>
    <property type="evidence" value="ECO:0007669"/>
    <property type="project" value="UniProtKB-KW"/>
</dbReference>
<dbReference type="FunFam" id="1.10.287.10:FF:000001">
    <property type="entry name" value="Non-structural protein 1"/>
    <property type="match status" value="1"/>
</dbReference>
<dbReference type="FunFam" id="3.30.420.330:FF:000001">
    <property type="entry name" value="Non-structural protein 1"/>
    <property type="match status" value="1"/>
</dbReference>
<dbReference type="Gene3D" id="3.30.420.330">
    <property type="entry name" value="Influenza virus non-structural protein, effector domain"/>
    <property type="match status" value="1"/>
</dbReference>
<dbReference type="Gene3D" id="1.10.287.10">
    <property type="entry name" value="S15/NS1, RNA-binding"/>
    <property type="match status" value="1"/>
</dbReference>
<dbReference type="HAMAP" id="MF_04066">
    <property type="entry name" value="INFV_NS1"/>
    <property type="match status" value="1"/>
</dbReference>
<dbReference type="InterPro" id="IPR004208">
    <property type="entry name" value="NS1"/>
</dbReference>
<dbReference type="InterPro" id="IPR000256">
    <property type="entry name" value="NS1A"/>
</dbReference>
<dbReference type="InterPro" id="IPR038064">
    <property type="entry name" value="NS1A_effect_dom-like_sf"/>
</dbReference>
<dbReference type="InterPro" id="IPR009068">
    <property type="entry name" value="uS15_NS1_RNA-bd_sf"/>
</dbReference>
<dbReference type="Pfam" id="PF00600">
    <property type="entry name" value="Flu_NS1"/>
    <property type="match status" value="1"/>
</dbReference>
<dbReference type="SUPFAM" id="SSF143021">
    <property type="entry name" value="Ns1 effector domain-like"/>
    <property type="match status" value="1"/>
</dbReference>
<dbReference type="SUPFAM" id="SSF47060">
    <property type="entry name" value="S15/NS1 RNA-binding domain"/>
    <property type="match status" value="1"/>
</dbReference>
<name>NS1_I01A1</name>
<organism>
    <name type="scientific">Influenza A virus (strain A/Chicken/Hong Kong/YU562/2001 H5N1 genotype B)</name>
    <dbReference type="NCBI Taxonomy" id="196426"/>
    <lineage>
        <taxon>Viruses</taxon>
        <taxon>Riboviria</taxon>
        <taxon>Orthornavirae</taxon>
        <taxon>Negarnaviricota</taxon>
        <taxon>Polyploviricotina</taxon>
        <taxon>Insthoviricetes</taxon>
        <taxon>Articulavirales</taxon>
        <taxon>Orthomyxoviridae</taxon>
        <taxon>Alphainfluenzavirus</taxon>
        <taxon>Alphainfluenzavirus influenzae</taxon>
        <taxon>Influenza A virus</taxon>
    </lineage>
</organism>
<accession>Q809Y0</accession>
<sequence length="225" mass="25511">MDSNTVSSFQVDCFLWHVRKRFADQELGDAPFLDRLRRDQKSLRGRGNTLGLDIETATRAGKQIVERILEEESDEALKMPASRYLTDMTLEEMSRGWFMLMPKQKVAGSLCIKMDQAIMDKNIILKANFSVIFDRLETLILLRAFTEEGAIVGEISPLPSLPGHTDEDVKNAIGALIGGLEWNDNTVRVSETLQRFAWRSSDEDGRPPLPPNQKRKMARTIESEV</sequence>
<evidence type="ECO:0000255" key="1">
    <source>
        <dbReference type="HAMAP-Rule" id="MF_04066"/>
    </source>
</evidence>
<evidence type="ECO:0000256" key="2">
    <source>
        <dbReference type="SAM" id="MobiDB-lite"/>
    </source>
</evidence>
<comment type="function">
    <text evidence="1">Inhibits post-transcriptional processing of cellular pre-mRNA, by binding and inhibiting two cellular proteins that are required for the 3'-end processing of cellular pre-mRNAs: the 30 kDa cleavage and polyadenylation specificity factor/CPSF4 and the poly(A)-binding protein 2/PABPN1. In turn, unprocessed 3' end pre-mRNAs accumulate in the host nucleus and are no longer exported to the cytoplasm. Cellular protein synthesis is thereby shut off very early after virus infection. Viral protein synthesis is not affected by the inhibition of the cellular 3' end processing machinery because the poly(A) tails of viral mRNAs are produced by the viral polymerase through a stuttering mechanism. Prevents the establishment of the cellular antiviral state by inhibiting TRIM25-mediated RIGI ubiquitination, which normally triggers the antiviral transduction signal that leads to the activation of type I IFN genes by transcription factors IRF3 and IRF7. Also binds poly(A) and U6 snRNA. Inhibits the integrated stress response (ISR) in the infected cell by blocking dsRNA binding by EIF2AK2/PKR and further phosphorylation of EIF2S1/EIF-2ALPHA. Stress granule formation is thus inhibited, which allows protein synthesis and viral replication.</text>
</comment>
<comment type="subunit">
    <text evidence="1">Homodimer. Interacts with host TRIM25 (via coiled coil); this interaction specifically inhibits TRIM25 multimerization and TRIM25-mediated RIGI CARD ubiquitination. Interacts with human EIF2AK2/PKR, CPSF4, IVNS1ABP and PABPN1.</text>
</comment>
<comment type="subcellular location">
    <subcellularLocation>
        <location evidence="1">Host nucleus</location>
    </subcellularLocation>
    <subcellularLocation>
        <location evidence="1">Host cytoplasm</location>
    </subcellularLocation>
    <text evidence="1">In uninfected, transfected cells, NS1 is localized in the nucleus. Only in virus infected cells, the nuclear export signal is unveiled, presumably by a viral protein, and a fraction of NS1 is exported in the cytoplasm.</text>
</comment>
<comment type="alternative products">
    <event type="alternative splicing"/>
    <isoform>
        <id>Q809Y0-1</id>
        <name>NS1</name>
        <sequence type="displayed"/>
    </isoform>
    <isoform>
        <id>P0C5T9-1</id>
        <name>NEP</name>
        <name>NS2</name>
        <sequence type="external"/>
    </isoform>
</comment>
<comment type="domain">
    <text evidence="1">The dsRNA-binding region is required for suppression of RNA silencing.</text>
</comment>
<comment type="PTM">
    <text evidence="1">Upon interferon induction, ISGylated via host HERC5; this results in the impairment of NS1 interaction with RNA targets due to its inability to form homodimers and to interact with host EIF2AK2/PKR.</text>
</comment>
<comment type="similarity">
    <text evidence="1">Belongs to the influenza A viruses NS1 family.</text>
</comment>
<proteinExistence type="inferred from homology"/>
<organismHost>
    <name type="scientific">Aves</name>
    <dbReference type="NCBI Taxonomy" id="8782"/>
</organismHost>
<organismHost>
    <name type="scientific">Felis catus</name>
    <name type="common">Cat</name>
    <name type="synonym">Felis silvestris catus</name>
    <dbReference type="NCBI Taxonomy" id="9685"/>
</organismHost>
<organismHost>
    <name type="scientific">Homo sapiens</name>
    <name type="common">Human</name>
    <dbReference type="NCBI Taxonomy" id="9606"/>
</organismHost>
<organismHost>
    <name type="scientific">Panthera pardus</name>
    <name type="common">Leopard</name>
    <name type="synonym">Felis pardus</name>
    <dbReference type="NCBI Taxonomy" id="9691"/>
</organismHost>
<organismHost>
    <name type="scientific">Panthera tigris</name>
    <name type="common">Tiger</name>
    <dbReference type="NCBI Taxonomy" id="9694"/>
</organismHost>
<organismHost>
    <name type="scientific">Sus scrofa</name>
    <name type="common">Pig</name>
    <dbReference type="NCBI Taxonomy" id="9823"/>
</organismHost>
<feature type="chain" id="PRO_0000311744" description="Non-structural protein 1">
    <location>
        <begin position="1"/>
        <end position="225"/>
    </location>
</feature>
<feature type="region of interest" description="RNA-binding and homodimerization" evidence="1">
    <location>
        <begin position="1"/>
        <end position="73"/>
    </location>
</feature>
<feature type="region of interest" description="CPSF4-binding" evidence="1">
    <location>
        <begin position="175"/>
        <end position="210"/>
    </location>
</feature>
<feature type="region of interest" description="Disordered" evidence="2">
    <location>
        <begin position="200"/>
        <end position="225"/>
    </location>
</feature>
<feature type="region of interest" description="PABPN1-binding" evidence="1">
    <location>
        <begin position="218"/>
        <end position="225"/>
    </location>
</feature>
<feature type="short sequence motif" description="Nuclear localization signal" evidence="1">
    <location>
        <begin position="34"/>
        <end position="38"/>
    </location>
</feature>
<feature type="short sequence motif" description="Nuclear export signal" evidence="1">
    <location>
        <begin position="132"/>
        <end position="141"/>
    </location>
</feature>
<reference key="1">
    <citation type="journal article" date="2002" name="Proc. Natl. Acad. Sci. U.S.A.">
        <title>Emergence of multiple genotypes of H5N1 avian influenza viruses in Hong Kong SAR.</title>
        <authorList>
            <person name="Guan Y."/>
            <person name="Peiris J.S.M."/>
            <person name="Lipatov A.S."/>
            <person name="Ellis T.M."/>
            <person name="Dyrting K.C."/>
            <person name="Krauss S."/>
            <person name="Zhang L.J."/>
            <person name="Webster R.G."/>
            <person name="Shortridge K.F."/>
        </authorList>
    </citation>
    <scope>NUCLEOTIDE SEQUENCE [GENOMIC RNA]</scope>
</reference>